<dbReference type="EMBL" id="FM209186">
    <property type="protein sequence ID" value="CAW29103.1"/>
    <property type="molecule type" value="Genomic_DNA"/>
</dbReference>
<dbReference type="RefSeq" id="WP_003086122.1">
    <property type="nucleotide sequence ID" value="NC_011770.1"/>
</dbReference>
<dbReference type="SMR" id="B7UXW6"/>
<dbReference type="GeneID" id="77222451"/>
<dbReference type="KEGG" id="pag:PLES_43481"/>
<dbReference type="HOGENOM" id="CLU_087936_0_0_6"/>
<dbReference type="GO" id="GO:0005737">
    <property type="term" value="C:cytoplasm"/>
    <property type="evidence" value="ECO:0007669"/>
    <property type="project" value="UniProtKB-SubCell"/>
</dbReference>
<dbReference type="GO" id="GO:0009379">
    <property type="term" value="C:Holliday junction helicase complex"/>
    <property type="evidence" value="ECO:0007669"/>
    <property type="project" value="InterPro"/>
</dbReference>
<dbReference type="GO" id="GO:0048476">
    <property type="term" value="C:Holliday junction resolvase complex"/>
    <property type="evidence" value="ECO:0007669"/>
    <property type="project" value="UniProtKB-UniRule"/>
</dbReference>
<dbReference type="GO" id="GO:0005524">
    <property type="term" value="F:ATP binding"/>
    <property type="evidence" value="ECO:0007669"/>
    <property type="project" value="InterPro"/>
</dbReference>
<dbReference type="GO" id="GO:0000400">
    <property type="term" value="F:four-way junction DNA binding"/>
    <property type="evidence" value="ECO:0007669"/>
    <property type="project" value="UniProtKB-UniRule"/>
</dbReference>
<dbReference type="GO" id="GO:0009378">
    <property type="term" value="F:four-way junction helicase activity"/>
    <property type="evidence" value="ECO:0007669"/>
    <property type="project" value="InterPro"/>
</dbReference>
<dbReference type="GO" id="GO:0006310">
    <property type="term" value="P:DNA recombination"/>
    <property type="evidence" value="ECO:0007669"/>
    <property type="project" value="UniProtKB-UniRule"/>
</dbReference>
<dbReference type="GO" id="GO:0006281">
    <property type="term" value="P:DNA repair"/>
    <property type="evidence" value="ECO:0007669"/>
    <property type="project" value="UniProtKB-UniRule"/>
</dbReference>
<dbReference type="CDD" id="cd14332">
    <property type="entry name" value="UBA_RuvA_C"/>
    <property type="match status" value="1"/>
</dbReference>
<dbReference type="Gene3D" id="1.10.150.20">
    <property type="entry name" value="5' to 3' exonuclease, C-terminal subdomain"/>
    <property type="match status" value="1"/>
</dbReference>
<dbReference type="Gene3D" id="1.10.8.10">
    <property type="entry name" value="DNA helicase RuvA subunit, C-terminal domain"/>
    <property type="match status" value="1"/>
</dbReference>
<dbReference type="Gene3D" id="2.40.50.140">
    <property type="entry name" value="Nucleic acid-binding proteins"/>
    <property type="match status" value="1"/>
</dbReference>
<dbReference type="HAMAP" id="MF_00031">
    <property type="entry name" value="DNA_HJ_migration_RuvA"/>
    <property type="match status" value="1"/>
</dbReference>
<dbReference type="InterPro" id="IPR013849">
    <property type="entry name" value="DNA_helicase_Holl-junc_RuvA_I"/>
</dbReference>
<dbReference type="InterPro" id="IPR003583">
    <property type="entry name" value="Hlx-hairpin-Hlx_DNA-bd_motif"/>
</dbReference>
<dbReference type="InterPro" id="IPR012340">
    <property type="entry name" value="NA-bd_OB-fold"/>
</dbReference>
<dbReference type="InterPro" id="IPR000085">
    <property type="entry name" value="RuvA"/>
</dbReference>
<dbReference type="InterPro" id="IPR010994">
    <property type="entry name" value="RuvA_2-like"/>
</dbReference>
<dbReference type="InterPro" id="IPR011114">
    <property type="entry name" value="RuvA_C"/>
</dbReference>
<dbReference type="InterPro" id="IPR036267">
    <property type="entry name" value="RuvA_C_sf"/>
</dbReference>
<dbReference type="NCBIfam" id="TIGR00084">
    <property type="entry name" value="ruvA"/>
    <property type="match status" value="1"/>
</dbReference>
<dbReference type="Pfam" id="PF14520">
    <property type="entry name" value="HHH_5"/>
    <property type="match status" value="1"/>
</dbReference>
<dbReference type="Pfam" id="PF07499">
    <property type="entry name" value="RuvA_C"/>
    <property type="match status" value="1"/>
</dbReference>
<dbReference type="Pfam" id="PF01330">
    <property type="entry name" value="RuvA_N"/>
    <property type="match status" value="1"/>
</dbReference>
<dbReference type="SMART" id="SM00278">
    <property type="entry name" value="HhH1"/>
    <property type="match status" value="2"/>
</dbReference>
<dbReference type="SUPFAM" id="SSF46929">
    <property type="entry name" value="DNA helicase RuvA subunit, C-terminal domain"/>
    <property type="match status" value="1"/>
</dbReference>
<dbReference type="SUPFAM" id="SSF50249">
    <property type="entry name" value="Nucleic acid-binding proteins"/>
    <property type="match status" value="1"/>
</dbReference>
<dbReference type="SUPFAM" id="SSF47781">
    <property type="entry name" value="RuvA domain 2-like"/>
    <property type="match status" value="1"/>
</dbReference>
<accession>B7UXW6</accession>
<comment type="function">
    <text evidence="1">The RuvA-RuvB-RuvC complex processes Holliday junction (HJ) DNA during genetic recombination and DNA repair, while the RuvA-RuvB complex plays an important role in the rescue of blocked DNA replication forks via replication fork reversal (RFR). RuvA specifically binds to HJ cruciform DNA, conferring on it an open structure. The RuvB hexamer acts as an ATP-dependent pump, pulling dsDNA into and through the RuvAB complex. HJ branch migration allows RuvC to scan DNA until it finds its consensus sequence, where it cleaves and resolves the cruciform DNA.</text>
</comment>
<comment type="subunit">
    <text evidence="1">Homotetramer. Forms an RuvA(8)-RuvB(12)-Holliday junction (HJ) complex. HJ DNA is sandwiched between 2 RuvA tetramers; dsDNA enters through RuvA and exits via RuvB. An RuvB hexamer assembles on each DNA strand where it exits the tetramer. Each RuvB hexamer is contacted by two RuvA subunits (via domain III) on 2 adjacent RuvB subunits; this complex drives branch migration. In the full resolvosome a probable DNA-RuvA(4)-RuvB(12)-RuvC(2) complex forms which resolves the HJ.</text>
</comment>
<comment type="subcellular location">
    <subcellularLocation>
        <location evidence="1">Cytoplasm</location>
    </subcellularLocation>
</comment>
<comment type="domain">
    <text evidence="1">Has three domains with a flexible linker between the domains II and III and assumes an 'L' shape. Domain III is highly mobile and contacts RuvB.</text>
</comment>
<comment type="similarity">
    <text evidence="1">Belongs to the RuvA family.</text>
</comment>
<name>RUVA_PSEA8</name>
<protein>
    <recommendedName>
        <fullName evidence="1">Holliday junction branch migration complex subunit RuvA</fullName>
    </recommendedName>
</protein>
<evidence type="ECO:0000255" key="1">
    <source>
        <dbReference type="HAMAP-Rule" id="MF_00031"/>
    </source>
</evidence>
<gene>
    <name evidence="1" type="primary">ruvA</name>
    <name type="ordered locus">PLES_43481</name>
</gene>
<proteinExistence type="inferred from homology"/>
<keyword id="KW-0963">Cytoplasm</keyword>
<keyword id="KW-0227">DNA damage</keyword>
<keyword id="KW-0233">DNA recombination</keyword>
<keyword id="KW-0234">DNA repair</keyword>
<keyword id="KW-0238">DNA-binding</keyword>
<feature type="chain" id="PRO_1000195170" description="Holliday junction branch migration complex subunit RuvA">
    <location>
        <begin position="1"/>
        <end position="201"/>
    </location>
</feature>
<feature type="region of interest" description="Domain I" evidence="1">
    <location>
        <begin position="1"/>
        <end position="64"/>
    </location>
</feature>
<feature type="region of interest" description="Domain II" evidence="1">
    <location>
        <begin position="65"/>
        <end position="143"/>
    </location>
</feature>
<feature type="region of interest" description="Flexible linker" evidence="1">
    <location>
        <begin position="144"/>
        <end position="152"/>
    </location>
</feature>
<feature type="region of interest" description="Domain III" evidence="1">
    <location>
        <begin position="153"/>
        <end position="201"/>
    </location>
</feature>
<reference key="1">
    <citation type="journal article" date="2009" name="Genome Res.">
        <title>Newly introduced genomic prophage islands are critical determinants of in vivo competitiveness in the Liverpool epidemic strain of Pseudomonas aeruginosa.</title>
        <authorList>
            <person name="Winstanley C."/>
            <person name="Langille M.G.I."/>
            <person name="Fothergill J.L."/>
            <person name="Kukavica-Ibrulj I."/>
            <person name="Paradis-Bleau C."/>
            <person name="Sanschagrin F."/>
            <person name="Thomson N.R."/>
            <person name="Winsor G.L."/>
            <person name="Quail M.A."/>
            <person name="Lennard N."/>
            <person name="Bignell A."/>
            <person name="Clarke L."/>
            <person name="Seeger K."/>
            <person name="Saunders D."/>
            <person name="Harris D."/>
            <person name="Parkhill J."/>
            <person name="Hancock R.E.W."/>
            <person name="Brinkman F.S.L."/>
            <person name="Levesque R.C."/>
        </authorList>
    </citation>
    <scope>NUCLEOTIDE SEQUENCE [LARGE SCALE GENOMIC DNA]</scope>
    <source>
        <strain>LESB58</strain>
    </source>
</reference>
<sequence>MIGRLRGTLAEKQPPHLILDVNGVGYEVEVPMTTLYRLPSVGEPVTLHTHLVVREDAHLLYGFAEKRERELFRELIRLNGVGPKLALALMSGLEVDELVRCVQAQDTSTLVKIPGVGKKTAERLLVELKDRFKAWENMPTIAPLVMEPRASATVSSAEADAVSALIALGFKPQEASRAVAAVPGEDLSSEEMIRQALKGMV</sequence>
<organism>
    <name type="scientific">Pseudomonas aeruginosa (strain LESB58)</name>
    <dbReference type="NCBI Taxonomy" id="557722"/>
    <lineage>
        <taxon>Bacteria</taxon>
        <taxon>Pseudomonadati</taxon>
        <taxon>Pseudomonadota</taxon>
        <taxon>Gammaproteobacteria</taxon>
        <taxon>Pseudomonadales</taxon>
        <taxon>Pseudomonadaceae</taxon>
        <taxon>Pseudomonas</taxon>
    </lineage>
</organism>